<sequence>MTRKNTTTNPWAKFHGPNLGYVIEQYDLYVTGAGSVDPELQELFEIFGAPSFQDDVVTGDNTATHFSPQNTGNIEKILKVVQLVEQIRSFGHTLAHINPMEDAANGQSLLEKAMNELSDADLKAIPAKTVWQDAPEGIHTALDVIHRLKEVYTQSLAYEFSHIQDSEERAWLHQMVESNSLRQPLSNKKRTALLKRLTAVEGFEQFLHKTFVGQKRFSIEGVDMLVPVLDEIVLEGAKNGVEDVMIGMAHRGRLSVLAHVLEKPYSHMFAEFKHAKIEGAVANSGWTGDVKYHLGREQVVSNEEVSTRVTLANNPSHLEFVNPVVEGFARAAQENRKKSGLPEQDTSKSFVILVHGDAAFPGQGIVSETLNLSRLNAYQTGGTIHVIANNAVGFTTDSYDSRSTKYSSDLAKGFDIPIVHVNADDPEACLAAANLAIQYRMLFKKDFLIDLIGYRRYGHNEMDDPAVTQPQVYKKIKNHPTVRAIYADQLQAAGVLNADEIETITQFTQEQLKSDYAQVPPADTSDATIHVKVPDVVAKGIQPIDTGVELDSLRAINEGLLSWPEGFNVYPKVKKILERRKDALEENGKIEWALAESLAFASILQEGTPIRLTGQDSQRGTFAHRHIVLHDTDTNETYSPLHRLPNINASFSVHNSPLSEAAVVGYEYGYNVFAPETLVMWEAQYGDFSNTAQALFDQYVSAGRAKWGQKSGLVLLLPHGYEGQGPEHSSARPERFLQLAAENNWTVANLTSAAQYFHILRRQASILGTEAVRPLVLMTPKSLLRHPLTLSTANQLSEGRFQPALEQENLGTKPNKVKRLVLSTGKMAIDLAAEIESGRHEYNLDEIHIVRIEQLYPFPAEKVQSIIKRFKNLEEIIWVQEEPRNMGAWHYMAPILFELAGDKVKTGYIGRPDRSSPSGGDPFAHKAEQELIVSHALDVKYNFRQDKLEIEVFSN</sequence>
<feature type="chain" id="PRO_0000162161" description="2-oxoglutarate dehydrogenase E1 component">
    <location>
        <begin position="1"/>
        <end position="955"/>
    </location>
</feature>
<dbReference type="EC" id="1.2.4.2" evidence="1"/>
<dbReference type="EMBL" id="AE016879">
    <property type="protein sequence ID" value="AAP25228.1"/>
    <property type="molecule type" value="Genomic_DNA"/>
</dbReference>
<dbReference type="EMBL" id="AE017334">
    <property type="protein sequence ID" value="AAT30361.1"/>
    <property type="molecule type" value="Genomic_DNA"/>
</dbReference>
<dbReference type="EMBL" id="AE017225">
    <property type="protein sequence ID" value="AAT53498.1"/>
    <property type="molecule type" value="Genomic_DNA"/>
</dbReference>
<dbReference type="RefSeq" id="NP_843742.1">
    <property type="nucleotide sequence ID" value="NC_003997.3"/>
</dbReference>
<dbReference type="RefSeq" id="WP_000197146.1">
    <property type="nucleotide sequence ID" value="NZ_WXXI01000021.1"/>
</dbReference>
<dbReference type="RefSeq" id="YP_027447.1">
    <property type="nucleotide sequence ID" value="NC_005945.1"/>
</dbReference>
<dbReference type="SMR" id="Q81TK1"/>
<dbReference type="IntAct" id="Q81TK1">
    <property type="interactions" value="5"/>
</dbReference>
<dbReference type="STRING" id="261594.GBAA_1270"/>
<dbReference type="DNASU" id="1086638"/>
<dbReference type="GeneID" id="45021268"/>
<dbReference type="KEGG" id="ban:BA_1270"/>
<dbReference type="KEGG" id="bar:GBAA_1270"/>
<dbReference type="KEGG" id="bat:BAS1177"/>
<dbReference type="PATRIC" id="fig|198094.11.peg.1245"/>
<dbReference type="eggNOG" id="COG0567">
    <property type="taxonomic scope" value="Bacteria"/>
</dbReference>
<dbReference type="HOGENOM" id="CLU_004709_1_0_9"/>
<dbReference type="OMA" id="RDSYCRT"/>
<dbReference type="OrthoDB" id="9759785at2"/>
<dbReference type="Proteomes" id="UP000000427">
    <property type="component" value="Chromosome"/>
</dbReference>
<dbReference type="Proteomes" id="UP000000594">
    <property type="component" value="Chromosome"/>
</dbReference>
<dbReference type="GO" id="GO:0005829">
    <property type="term" value="C:cytosol"/>
    <property type="evidence" value="ECO:0007669"/>
    <property type="project" value="TreeGrafter"/>
</dbReference>
<dbReference type="GO" id="GO:0045252">
    <property type="term" value="C:oxoglutarate dehydrogenase complex"/>
    <property type="evidence" value="ECO:0007669"/>
    <property type="project" value="TreeGrafter"/>
</dbReference>
<dbReference type="GO" id="GO:0004591">
    <property type="term" value="F:oxoglutarate dehydrogenase (succinyl-transferring) activity"/>
    <property type="evidence" value="ECO:0007669"/>
    <property type="project" value="UniProtKB-UniRule"/>
</dbReference>
<dbReference type="GO" id="GO:0030976">
    <property type="term" value="F:thiamine pyrophosphate binding"/>
    <property type="evidence" value="ECO:0007669"/>
    <property type="project" value="UniProtKB-UniRule"/>
</dbReference>
<dbReference type="GO" id="GO:0006096">
    <property type="term" value="P:glycolytic process"/>
    <property type="evidence" value="ECO:0007669"/>
    <property type="project" value="UniProtKB-UniRule"/>
</dbReference>
<dbReference type="GO" id="GO:0006099">
    <property type="term" value="P:tricarboxylic acid cycle"/>
    <property type="evidence" value="ECO:0007669"/>
    <property type="project" value="TreeGrafter"/>
</dbReference>
<dbReference type="CDD" id="cd02016">
    <property type="entry name" value="TPP_E1_OGDC_like"/>
    <property type="match status" value="1"/>
</dbReference>
<dbReference type="FunFam" id="3.40.50.11610:FF:000002">
    <property type="entry name" value="2-oxoglutarate dehydrogenase E1 component"/>
    <property type="match status" value="1"/>
</dbReference>
<dbReference type="FunFam" id="3.40.50.970:FF:000036">
    <property type="entry name" value="2-oxoglutarate dehydrogenase E1 component"/>
    <property type="match status" value="1"/>
</dbReference>
<dbReference type="Gene3D" id="3.40.50.12470">
    <property type="match status" value="1"/>
</dbReference>
<dbReference type="Gene3D" id="3.40.50.970">
    <property type="match status" value="1"/>
</dbReference>
<dbReference type="Gene3D" id="3.40.50.11610">
    <property type="entry name" value="Multifunctional 2-oxoglutarate metabolism enzyme, C-terminal domain"/>
    <property type="match status" value="1"/>
</dbReference>
<dbReference type="HAMAP" id="MF_01169">
    <property type="entry name" value="SucA_OdhA"/>
    <property type="match status" value="1"/>
</dbReference>
<dbReference type="InterPro" id="IPR011603">
    <property type="entry name" value="2oxoglutarate_DH_E1"/>
</dbReference>
<dbReference type="InterPro" id="IPR023784">
    <property type="entry name" value="2oxoglutarate_DH_E1_bac"/>
</dbReference>
<dbReference type="InterPro" id="IPR001017">
    <property type="entry name" value="DH_E1"/>
</dbReference>
<dbReference type="InterPro" id="IPR042179">
    <property type="entry name" value="KGD_C_sf"/>
</dbReference>
<dbReference type="InterPro" id="IPR031717">
    <property type="entry name" value="ODO-1/KGD_C"/>
</dbReference>
<dbReference type="InterPro" id="IPR029061">
    <property type="entry name" value="THDP-binding"/>
</dbReference>
<dbReference type="InterPro" id="IPR005475">
    <property type="entry name" value="Transketolase-like_Pyr-bd"/>
</dbReference>
<dbReference type="NCBIfam" id="TIGR00239">
    <property type="entry name" value="2oxo_dh_E1"/>
    <property type="match status" value="1"/>
</dbReference>
<dbReference type="NCBIfam" id="NF006914">
    <property type="entry name" value="PRK09404.1"/>
    <property type="match status" value="1"/>
</dbReference>
<dbReference type="NCBIfam" id="NF008907">
    <property type="entry name" value="PRK12270.1"/>
    <property type="match status" value="1"/>
</dbReference>
<dbReference type="PANTHER" id="PTHR23152:SF4">
    <property type="entry name" value="2-OXOADIPATE DEHYDROGENASE COMPLEX COMPONENT E1"/>
    <property type="match status" value="1"/>
</dbReference>
<dbReference type="PANTHER" id="PTHR23152">
    <property type="entry name" value="2-OXOGLUTARATE DEHYDROGENASE"/>
    <property type="match status" value="1"/>
</dbReference>
<dbReference type="Pfam" id="PF00676">
    <property type="entry name" value="E1_dh"/>
    <property type="match status" value="1"/>
</dbReference>
<dbReference type="Pfam" id="PF16870">
    <property type="entry name" value="OxoGdeHyase_C"/>
    <property type="match status" value="1"/>
</dbReference>
<dbReference type="Pfam" id="PF02779">
    <property type="entry name" value="Transket_pyr"/>
    <property type="match status" value="1"/>
</dbReference>
<dbReference type="PIRSF" id="PIRSF000157">
    <property type="entry name" value="Oxoglu_dh_E1"/>
    <property type="match status" value="1"/>
</dbReference>
<dbReference type="SMART" id="SM00861">
    <property type="entry name" value="Transket_pyr"/>
    <property type="match status" value="1"/>
</dbReference>
<dbReference type="SUPFAM" id="SSF52518">
    <property type="entry name" value="Thiamin diphosphate-binding fold (THDP-binding)"/>
    <property type="match status" value="2"/>
</dbReference>
<organism>
    <name type="scientific">Bacillus anthracis</name>
    <dbReference type="NCBI Taxonomy" id="1392"/>
    <lineage>
        <taxon>Bacteria</taxon>
        <taxon>Bacillati</taxon>
        <taxon>Bacillota</taxon>
        <taxon>Bacilli</taxon>
        <taxon>Bacillales</taxon>
        <taxon>Bacillaceae</taxon>
        <taxon>Bacillus</taxon>
        <taxon>Bacillus cereus group</taxon>
    </lineage>
</organism>
<keyword id="KW-0324">Glycolysis</keyword>
<keyword id="KW-0560">Oxidoreductase</keyword>
<keyword id="KW-1185">Reference proteome</keyword>
<keyword id="KW-0786">Thiamine pyrophosphate</keyword>
<gene>
    <name evidence="1" type="primary">odhA</name>
    <name type="ordered locus">BA_1270</name>
    <name type="ordered locus">GBAA_1270</name>
    <name type="ordered locus">BAS1177</name>
</gene>
<protein>
    <recommendedName>
        <fullName evidence="1">2-oxoglutarate dehydrogenase E1 component</fullName>
        <ecNumber evidence="1">1.2.4.2</ecNumber>
    </recommendedName>
    <alternativeName>
        <fullName evidence="1">Alpha-ketoglutarate dehydrogenase</fullName>
    </alternativeName>
</protein>
<comment type="function">
    <text evidence="1">E1 component of the 2-oxoglutarate dehydrogenase (OGDH) complex which catalyzes the decarboxylation of 2-oxoglutarate, the first step in the conversion of 2-oxoglutarate to succinyl-CoA and CO(2).</text>
</comment>
<comment type="catalytic activity">
    <reaction evidence="1">
        <text>N(6)-[(R)-lipoyl]-L-lysyl-[protein] + 2-oxoglutarate + H(+) = N(6)-[(R)-S(8)-succinyldihydrolipoyl]-L-lysyl-[protein] + CO2</text>
        <dbReference type="Rhea" id="RHEA:12188"/>
        <dbReference type="Rhea" id="RHEA-COMP:10474"/>
        <dbReference type="Rhea" id="RHEA-COMP:20092"/>
        <dbReference type="ChEBI" id="CHEBI:15378"/>
        <dbReference type="ChEBI" id="CHEBI:16526"/>
        <dbReference type="ChEBI" id="CHEBI:16810"/>
        <dbReference type="ChEBI" id="CHEBI:83099"/>
        <dbReference type="ChEBI" id="CHEBI:83120"/>
        <dbReference type="EC" id="1.2.4.2"/>
    </reaction>
</comment>
<comment type="cofactor">
    <cofactor evidence="1">
        <name>thiamine diphosphate</name>
        <dbReference type="ChEBI" id="CHEBI:58937"/>
    </cofactor>
</comment>
<comment type="subunit">
    <text evidence="1">Homodimer. Part of the 2-oxoglutarate dehydrogenase (OGDH) complex composed of E1 (2-oxoglutarate dehydrogenase), E2 (dihydrolipoamide succinyltransferase) and E3 (dihydrolipoamide dehydrogenase); the complex contains multiple copies of the three enzymatic components (E1, E2 and E3).</text>
</comment>
<comment type="similarity">
    <text evidence="1">Belongs to the alpha-ketoglutarate dehydrogenase family.</text>
</comment>
<accession>Q81TK1</accession>
<accession>Q6I1T3</accession>
<accession>Q6KVM3</accession>
<evidence type="ECO:0000255" key="1">
    <source>
        <dbReference type="HAMAP-Rule" id="MF_01169"/>
    </source>
</evidence>
<name>ODO1_BACAN</name>
<proteinExistence type="inferred from homology"/>
<reference key="1">
    <citation type="journal article" date="2003" name="Nature">
        <title>The genome sequence of Bacillus anthracis Ames and comparison to closely related bacteria.</title>
        <authorList>
            <person name="Read T.D."/>
            <person name="Peterson S.N."/>
            <person name="Tourasse N.J."/>
            <person name="Baillie L.W."/>
            <person name="Paulsen I.T."/>
            <person name="Nelson K.E."/>
            <person name="Tettelin H."/>
            <person name="Fouts D.E."/>
            <person name="Eisen J.A."/>
            <person name="Gill S.R."/>
            <person name="Holtzapple E.K."/>
            <person name="Okstad O.A."/>
            <person name="Helgason E."/>
            <person name="Rilstone J."/>
            <person name="Wu M."/>
            <person name="Kolonay J.F."/>
            <person name="Beanan M.J."/>
            <person name="Dodson R.J."/>
            <person name="Brinkac L.M."/>
            <person name="Gwinn M.L."/>
            <person name="DeBoy R.T."/>
            <person name="Madpu R."/>
            <person name="Daugherty S.C."/>
            <person name="Durkin A.S."/>
            <person name="Haft D.H."/>
            <person name="Nelson W.C."/>
            <person name="Peterson J.D."/>
            <person name="Pop M."/>
            <person name="Khouri H.M."/>
            <person name="Radune D."/>
            <person name="Benton J.L."/>
            <person name="Mahamoud Y."/>
            <person name="Jiang L."/>
            <person name="Hance I.R."/>
            <person name="Weidman J.F."/>
            <person name="Berry K.J."/>
            <person name="Plaut R.D."/>
            <person name="Wolf A.M."/>
            <person name="Watkins K.L."/>
            <person name="Nierman W.C."/>
            <person name="Hazen A."/>
            <person name="Cline R.T."/>
            <person name="Redmond C."/>
            <person name="Thwaite J.E."/>
            <person name="White O."/>
            <person name="Salzberg S.L."/>
            <person name="Thomason B."/>
            <person name="Friedlander A.M."/>
            <person name="Koehler T.M."/>
            <person name="Hanna P.C."/>
            <person name="Kolstoe A.-B."/>
            <person name="Fraser C.M."/>
        </authorList>
    </citation>
    <scope>NUCLEOTIDE SEQUENCE [LARGE SCALE GENOMIC DNA]</scope>
    <source>
        <strain>Ames / isolate Porton</strain>
    </source>
</reference>
<reference key="2">
    <citation type="journal article" date="2009" name="J. Bacteriol.">
        <title>The complete genome sequence of Bacillus anthracis Ames 'Ancestor'.</title>
        <authorList>
            <person name="Ravel J."/>
            <person name="Jiang L."/>
            <person name="Stanley S.T."/>
            <person name="Wilson M.R."/>
            <person name="Decker R.S."/>
            <person name="Read T.D."/>
            <person name="Worsham P."/>
            <person name="Keim P.S."/>
            <person name="Salzberg S.L."/>
            <person name="Fraser-Liggett C.M."/>
            <person name="Rasko D.A."/>
        </authorList>
    </citation>
    <scope>NUCLEOTIDE SEQUENCE [LARGE SCALE GENOMIC DNA]</scope>
    <source>
        <strain>Ames ancestor</strain>
    </source>
</reference>
<reference key="3">
    <citation type="submission" date="2004-01" db="EMBL/GenBank/DDBJ databases">
        <title>Complete genome sequence of Bacillus anthracis Sterne.</title>
        <authorList>
            <person name="Brettin T.S."/>
            <person name="Bruce D."/>
            <person name="Challacombe J.F."/>
            <person name="Gilna P."/>
            <person name="Han C."/>
            <person name="Hill K."/>
            <person name="Hitchcock P."/>
            <person name="Jackson P."/>
            <person name="Keim P."/>
            <person name="Longmire J."/>
            <person name="Lucas S."/>
            <person name="Okinaka R."/>
            <person name="Richardson P."/>
            <person name="Rubin E."/>
            <person name="Tice H."/>
        </authorList>
    </citation>
    <scope>NUCLEOTIDE SEQUENCE [LARGE SCALE GENOMIC DNA]</scope>
    <source>
        <strain>Sterne</strain>
    </source>
</reference>